<accession>Q7U3D7</accession>
<name>PPK1_PARMW</name>
<dbReference type="EC" id="2.7.4.1" evidence="1"/>
<dbReference type="EMBL" id="BX569695">
    <property type="protein sequence ID" value="CAE09010.1"/>
    <property type="molecule type" value="Genomic_DNA"/>
</dbReference>
<dbReference type="RefSeq" id="WP_011129348.1">
    <property type="nucleotide sequence ID" value="NC_005070.1"/>
</dbReference>
<dbReference type="SMR" id="Q7U3D7"/>
<dbReference type="STRING" id="84588.SYNW2495"/>
<dbReference type="KEGG" id="syw:SYNW2495"/>
<dbReference type="eggNOG" id="COG0855">
    <property type="taxonomic scope" value="Bacteria"/>
</dbReference>
<dbReference type="HOGENOM" id="CLU_009678_5_0_3"/>
<dbReference type="Proteomes" id="UP000001422">
    <property type="component" value="Chromosome"/>
</dbReference>
<dbReference type="GO" id="GO:0009358">
    <property type="term" value="C:polyphosphate kinase complex"/>
    <property type="evidence" value="ECO:0007669"/>
    <property type="project" value="InterPro"/>
</dbReference>
<dbReference type="GO" id="GO:0005524">
    <property type="term" value="F:ATP binding"/>
    <property type="evidence" value="ECO:0007669"/>
    <property type="project" value="UniProtKB-KW"/>
</dbReference>
<dbReference type="GO" id="GO:0046872">
    <property type="term" value="F:metal ion binding"/>
    <property type="evidence" value="ECO:0007669"/>
    <property type="project" value="UniProtKB-KW"/>
</dbReference>
<dbReference type="GO" id="GO:0008976">
    <property type="term" value="F:polyphosphate kinase activity"/>
    <property type="evidence" value="ECO:0007669"/>
    <property type="project" value="UniProtKB-UniRule"/>
</dbReference>
<dbReference type="GO" id="GO:0006799">
    <property type="term" value="P:polyphosphate biosynthetic process"/>
    <property type="evidence" value="ECO:0007669"/>
    <property type="project" value="UniProtKB-UniRule"/>
</dbReference>
<dbReference type="CDD" id="cd09165">
    <property type="entry name" value="PLDc_PaPPK1_C1_like"/>
    <property type="match status" value="1"/>
</dbReference>
<dbReference type="CDD" id="cd09168">
    <property type="entry name" value="PLDc_PaPPK1_C2_like"/>
    <property type="match status" value="1"/>
</dbReference>
<dbReference type="FunFam" id="3.30.870.10:FF:000001">
    <property type="entry name" value="Polyphosphate kinase"/>
    <property type="match status" value="1"/>
</dbReference>
<dbReference type="Gene3D" id="3.30.870.10">
    <property type="entry name" value="Endonuclease Chain A"/>
    <property type="match status" value="2"/>
</dbReference>
<dbReference type="Gene3D" id="3.30.1840.10">
    <property type="entry name" value="Polyphosphate kinase middle domain"/>
    <property type="match status" value="1"/>
</dbReference>
<dbReference type="Gene3D" id="1.20.58.310">
    <property type="entry name" value="Polyphosphate kinase N-terminal domain"/>
    <property type="match status" value="1"/>
</dbReference>
<dbReference type="HAMAP" id="MF_00347">
    <property type="entry name" value="Polyphosphate_kinase"/>
    <property type="match status" value="1"/>
</dbReference>
<dbReference type="InterPro" id="IPR003414">
    <property type="entry name" value="PP_kinase"/>
</dbReference>
<dbReference type="InterPro" id="IPR041108">
    <property type="entry name" value="PP_kinase_C_1"/>
</dbReference>
<dbReference type="InterPro" id="IPR024953">
    <property type="entry name" value="PP_kinase_middle"/>
</dbReference>
<dbReference type="InterPro" id="IPR036830">
    <property type="entry name" value="PP_kinase_middle_dom_sf"/>
</dbReference>
<dbReference type="InterPro" id="IPR025200">
    <property type="entry name" value="PPK_C_dom2"/>
</dbReference>
<dbReference type="InterPro" id="IPR025198">
    <property type="entry name" value="PPK_N_dom"/>
</dbReference>
<dbReference type="InterPro" id="IPR036832">
    <property type="entry name" value="PPK_N_dom_sf"/>
</dbReference>
<dbReference type="NCBIfam" id="TIGR03705">
    <property type="entry name" value="poly_P_kin"/>
    <property type="match status" value="1"/>
</dbReference>
<dbReference type="NCBIfam" id="NF003917">
    <property type="entry name" value="PRK05443.1-1"/>
    <property type="match status" value="1"/>
</dbReference>
<dbReference type="NCBIfam" id="NF003918">
    <property type="entry name" value="PRK05443.1-2"/>
    <property type="match status" value="1"/>
</dbReference>
<dbReference type="NCBIfam" id="NF003921">
    <property type="entry name" value="PRK05443.2-2"/>
    <property type="match status" value="1"/>
</dbReference>
<dbReference type="PANTHER" id="PTHR30218">
    <property type="entry name" value="POLYPHOSPHATE KINASE"/>
    <property type="match status" value="1"/>
</dbReference>
<dbReference type="PANTHER" id="PTHR30218:SF0">
    <property type="entry name" value="POLYPHOSPHATE KINASE"/>
    <property type="match status" value="1"/>
</dbReference>
<dbReference type="Pfam" id="PF02503">
    <property type="entry name" value="PP_kinase"/>
    <property type="match status" value="1"/>
</dbReference>
<dbReference type="Pfam" id="PF13090">
    <property type="entry name" value="PP_kinase_C"/>
    <property type="match status" value="1"/>
</dbReference>
<dbReference type="Pfam" id="PF17941">
    <property type="entry name" value="PP_kinase_C_1"/>
    <property type="match status" value="1"/>
</dbReference>
<dbReference type="Pfam" id="PF13089">
    <property type="entry name" value="PP_kinase_N"/>
    <property type="match status" value="1"/>
</dbReference>
<dbReference type="PIRSF" id="PIRSF015589">
    <property type="entry name" value="PP_kinase"/>
    <property type="match status" value="1"/>
</dbReference>
<dbReference type="SUPFAM" id="SSF56024">
    <property type="entry name" value="Phospholipase D/nuclease"/>
    <property type="match status" value="2"/>
</dbReference>
<dbReference type="SUPFAM" id="SSF143724">
    <property type="entry name" value="PHP14-like"/>
    <property type="match status" value="1"/>
</dbReference>
<dbReference type="SUPFAM" id="SSF140356">
    <property type="entry name" value="PPK N-terminal domain-like"/>
    <property type="match status" value="1"/>
</dbReference>
<organism>
    <name type="scientific">Parasynechococcus marenigrum (strain WH8102)</name>
    <dbReference type="NCBI Taxonomy" id="84588"/>
    <lineage>
        <taxon>Bacteria</taxon>
        <taxon>Bacillati</taxon>
        <taxon>Cyanobacteriota</taxon>
        <taxon>Cyanophyceae</taxon>
        <taxon>Synechococcales</taxon>
        <taxon>Prochlorococcaceae</taxon>
        <taxon>Parasynechococcus</taxon>
        <taxon>Parasynechococcus marenigrum</taxon>
    </lineage>
</organism>
<evidence type="ECO:0000255" key="1">
    <source>
        <dbReference type="HAMAP-Rule" id="MF_00347"/>
    </source>
</evidence>
<protein>
    <recommendedName>
        <fullName evidence="1">Polyphosphate kinase</fullName>
        <ecNumber evidence="1">2.7.4.1</ecNumber>
    </recommendedName>
    <alternativeName>
        <fullName evidence="1">ATP-polyphosphate phosphotransferase</fullName>
    </alternativeName>
    <alternativeName>
        <fullName evidence="1">Polyphosphoric acid kinase</fullName>
    </alternativeName>
</protein>
<keyword id="KW-0067">ATP-binding</keyword>
<keyword id="KW-0418">Kinase</keyword>
<keyword id="KW-0460">Magnesium</keyword>
<keyword id="KW-0479">Metal-binding</keyword>
<keyword id="KW-0547">Nucleotide-binding</keyword>
<keyword id="KW-0597">Phosphoprotein</keyword>
<keyword id="KW-0677">Repeat</keyword>
<keyword id="KW-0808">Transferase</keyword>
<comment type="function">
    <text evidence="1">Catalyzes the reversible transfer of the terminal phosphate of ATP to form a long-chain polyphosphate (polyP).</text>
</comment>
<comment type="catalytic activity">
    <reaction evidence="1">
        <text>[phosphate](n) + ATP = [phosphate](n+1) + ADP</text>
        <dbReference type="Rhea" id="RHEA:19573"/>
        <dbReference type="Rhea" id="RHEA-COMP:9859"/>
        <dbReference type="Rhea" id="RHEA-COMP:14280"/>
        <dbReference type="ChEBI" id="CHEBI:16838"/>
        <dbReference type="ChEBI" id="CHEBI:30616"/>
        <dbReference type="ChEBI" id="CHEBI:456216"/>
        <dbReference type="EC" id="2.7.4.1"/>
    </reaction>
</comment>
<comment type="cofactor">
    <cofactor evidence="1">
        <name>Mg(2+)</name>
        <dbReference type="ChEBI" id="CHEBI:18420"/>
    </cofactor>
</comment>
<comment type="PTM">
    <text evidence="1">An intermediate of this reaction is the autophosphorylated ppk in which a phosphate is covalently linked to a histidine residue through a N-P bond.</text>
</comment>
<comment type="similarity">
    <text evidence="1">Belongs to the polyphosphate kinase 1 (PPK1) family.</text>
</comment>
<feature type="chain" id="PRO_0000128664" description="Polyphosphate kinase">
    <location>
        <begin position="1"/>
        <end position="712"/>
    </location>
</feature>
<feature type="active site" description="Phosphohistidine intermediate" evidence="1">
    <location>
        <position position="458"/>
    </location>
</feature>
<feature type="binding site" evidence="1">
    <location>
        <position position="49"/>
    </location>
    <ligand>
        <name>ATP</name>
        <dbReference type="ChEBI" id="CHEBI:30616"/>
    </ligand>
</feature>
<feature type="binding site" evidence="1">
    <location>
        <position position="398"/>
    </location>
    <ligand>
        <name>Mg(2+)</name>
        <dbReference type="ChEBI" id="CHEBI:18420"/>
    </ligand>
</feature>
<feature type="binding site" evidence="1">
    <location>
        <position position="428"/>
    </location>
    <ligand>
        <name>Mg(2+)</name>
        <dbReference type="ChEBI" id="CHEBI:18420"/>
    </ligand>
</feature>
<feature type="binding site" evidence="1">
    <location>
        <position position="491"/>
    </location>
    <ligand>
        <name>ATP</name>
        <dbReference type="ChEBI" id="CHEBI:30616"/>
    </ligand>
</feature>
<feature type="binding site" evidence="1">
    <location>
        <position position="587"/>
    </location>
    <ligand>
        <name>ATP</name>
        <dbReference type="ChEBI" id="CHEBI:30616"/>
    </ligand>
</feature>
<feature type="binding site" evidence="1">
    <location>
        <position position="615"/>
    </location>
    <ligand>
        <name>ATP</name>
        <dbReference type="ChEBI" id="CHEBI:30616"/>
    </ligand>
</feature>
<reference key="1">
    <citation type="journal article" date="2003" name="Nature">
        <title>The genome of a motile marine Synechococcus.</title>
        <authorList>
            <person name="Palenik B."/>
            <person name="Brahamsha B."/>
            <person name="Larimer F.W."/>
            <person name="Land M.L."/>
            <person name="Hauser L."/>
            <person name="Chain P."/>
            <person name="Lamerdin J.E."/>
            <person name="Regala W."/>
            <person name="Allen E.E."/>
            <person name="McCarren J."/>
            <person name="Paulsen I.T."/>
            <person name="Dufresne A."/>
            <person name="Partensky F."/>
            <person name="Webb E.A."/>
            <person name="Waterbury J."/>
        </authorList>
    </citation>
    <scope>NUCLEOTIDE SEQUENCE [LARGE SCALE GENOMIC DNA]</scope>
    <source>
        <strain>WH8102</strain>
    </source>
</reference>
<gene>
    <name evidence="1" type="primary">ppk</name>
    <name type="ordered locus">SYNW2495</name>
</gene>
<sequence>MSSAVLSPDRYINRELSWIAFNQRVLAQALDQRTPLLDQAKFSAIFSNNLDEFFMVRVASLKSQVEAGITTPSEDGKTPLEQLLTIRERLIPLLQQQQDHYRKQLRKKLLDHNVQLLDYSQLNKHQQQWVSDTFRHSVFPVLTPLAVDPAHPFPFVSNLSLNVAAVIHDPESGQRQFARVKVPQKNLPRFVSIPTELSESDPKPIHTAVPLEQVIAFNLDLLFPGMSVQGHYFFRVTRDADLELRDLEADDLMLALEQGLRKRRMGGEVVRLEVPNDMPEDVVEMLMNGLAVEEEDLYRIDGPLGLDDLFGLMALPLPKLKDKQHSGQTPTVLARTQQHLIDEGAIKPEEFESIFSVMRQQDILLHHPYDLFSTTVEEFINQAADDPQVMGIKMTLYRTSKDSPIIAALIRAAENGKQVMALVELKARFDEDNNIQWARQLERSGVHVVYGVLGLKTHTKIVLVVRKEQEKLRSYVHIGTGNYNSKTSKLYTDLGLLSTRPELGQDLVELFNYLTGFSKQQSFRRLLVAPVTLRKGMESLIRREIEHAREGRDGHIRAKMNSLVDPDIIALLYEAAAANVRVELIIRGMCSLYPGREGLSESISVVSIIGQFLEHSRIFWFGNGGSPEVYIGSADWMSRNLDRRVEAVTPVEDPNLRGRLERLLELYLKDNRGAWDMQSDGSFIQRQPEDGEDVRNSQVQLIKQWSQGVPQS</sequence>
<proteinExistence type="inferred from homology"/>